<reference key="1">
    <citation type="journal article" date="2004" name="Genome Res.">
        <title>The genome sequence of Mycoplasma mycoides subsp. mycoides SC type strain PG1T, the causative agent of contagious bovine pleuropneumonia (CBPP).</title>
        <authorList>
            <person name="Westberg J."/>
            <person name="Persson A."/>
            <person name="Holmberg A."/>
            <person name="Goesmann A."/>
            <person name="Lundeberg J."/>
            <person name="Johansson K.-E."/>
            <person name="Pettersson B."/>
            <person name="Uhlen M."/>
        </authorList>
    </citation>
    <scope>NUCLEOTIDE SEQUENCE [LARGE SCALE GENOMIC DNA]</scope>
    <source>
        <strain>CCUG 32753 / NCTC 10114 / PG1</strain>
    </source>
</reference>
<sequence length="137" mass="16104">MIKKYEVMYILDQDVKDTKELVSKLDAILAENGKILESNDLGLLDFTYEINHKKKGFYHVVIVEATTQAIKEFERIAKIDKNVVRTLVLNTENIQNYEQSVVLSKTDMTKYEEEQREKKNFRKPFIKREEAAVKESK</sequence>
<dbReference type="EMBL" id="BX293980">
    <property type="protein sequence ID" value="CAE76680.1"/>
    <property type="molecule type" value="Genomic_DNA"/>
</dbReference>
<dbReference type="RefSeq" id="NP_975038.1">
    <property type="nucleotide sequence ID" value="NC_005364.2"/>
</dbReference>
<dbReference type="RefSeq" id="WP_011166238.1">
    <property type="nucleotide sequence ID" value="NC_005364.2"/>
</dbReference>
<dbReference type="SMR" id="Q6MUK4"/>
<dbReference type="STRING" id="272632.MSC_0027"/>
<dbReference type="KEGG" id="mmy:MSC_0027"/>
<dbReference type="PATRIC" id="fig|272632.4.peg.27"/>
<dbReference type="eggNOG" id="COG0360">
    <property type="taxonomic scope" value="Bacteria"/>
</dbReference>
<dbReference type="HOGENOM" id="CLU_113441_1_0_14"/>
<dbReference type="Proteomes" id="UP000001016">
    <property type="component" value="Chromosome"/>
</dbReference>
<dbReference type="GO" id="GO:0005737">
    <property type="term" value="C:cytoplasm"/>
    <property type="evidence" value="ECO:0007669"/>
    <property type="project" value="UniProtKB-ARBA"/>
</dbReference>
<dbReference type="GO" id="GO:1990904">
    <property type="term" value="C:ribonucleoprotein complex"/>
    <property type="evidence" value="ECO:0007669"/>
    <property type="project" value="UniProtKB-KW"/>
</dbReference>
<dbReference type="GO" id="GO:0005840">
    <property type="term" value="C:ribosome"/>
    <property type="evidence" value="ECO:0007669"/>
    <property type="project" value="UniProtKB-KW"/>
</dbReference>
<dbReference type="GO" id="GO:0070181">
    <property type="term" value="F:small ribosomal subunit rRNA binding"/>
    <property type="evidence" value="ECO:0007669"/>
    <property type="project" value="TreeGrafter"/>
</dbReference>
<dbReference type="GO" id="GO:0003735">
    <property type="term" value="F:structural constituent of ribosome"/>
    <property type="evidence" value="ECO:0007669"/>
    <property type="project" value="InterPro"/>
</dbReference>
<dbReference type="GO" id="GO:0006412">
    <property type="term" value="P:translation"/>
    <property type="evidence" value="ECO:0007669"/>
    <property type="project" value="UniProtKB-UniRule"/>
</dbReference>
<dbReference type="CDD" id="cd00473">
    <property type="entry name" value="bS6"/>
    <property type="match status" value="1"/>
</dbReference>
<dbReference type="Gene3D" id="3.30.70.60">
    <property type="match status" value="1"/>
</dbReference>
<dbReference type="HAMAP" id="MF_00360">
    <property type="entry name" value="Ribosomal_bS6"/>
    <property type="match status" value="1"/>
</dbReference>
<dbReference type="InterPro" id="IPR000529">
    <property type="entry name" value="Ribosomal_bS6"/>
</dbReference>
<dbReference type="InterPro" id="IPR035980">
    <property type="entry name" value="Ribosomal_bS6_sf"/>
</dbReference>
<dbReference type="InterPro" id="IPR020814">
    <property type="entry name" value="Ribosomal_S6_plastid/chlpt"/>
</dbReference>
<dbReference type="InterPro" id="IPR014717">
    <property type="entry name" value="Transl_elong_EF1B/ribsomal_bS6"/>
</dbReference>
<dbReference type="NCBIfam" id="TIGR00166">
    <property type="entry name" value="S6"/>
    <property type="match status" value="1"/>
</dbReference>
<dbReference type="PANTHER" id="PTHR21011">
    <property type="entry name" value="MITOCHONDRIAL 28S RIBOSOMAL PROTEIN S6"/>
    <property type="match status" value="1"/>
</dbReference>
<dbReference type="PANTHER" id="PTHR21011:SF1">
    <property type="entry name" value="SMALL RIBOSOMAL SUBUNIT PROTEIN BS6M"/>
    <property type="match status" value="1"/>
</dbReference>
<dbReference type="Pfam" id="PF01250">
    <property type="entry name" value="Ribosomal_S6"/>
    <property type="match status" value="1"/>
</dbReference>
<dbReference type="SUPFAM" id="SSF54995">
    <property type="entry name" value="Ribosomal protein S6"/>
    <property type="match status" value="1"/>
</dbReference>
<comment type="function">
    <text evidence="1">Binds together with bS18 to 16S ribosomal RNA.</text>
</comment>
<comment type="similarity">
    <text evidence="1">Belongs to the bacterial ribosomal protein bS6 family.</text>
</comment>
<keyword id="KW-1185">Reference proteome</keyword>
<keyword id="KW-0687">Ribonucleoprotein</keyword>
<keyword id="KW-0689">Ribosomal protein</keyword>
<keyword id="KW-0694">RNA-binding</keyword>
<keyword id="KW-0699">rRNA-binding</keyword>
<protein>
    <recommendedName>
        <fullName evidence="1">Small ribosomal subunit protein bS6</fullName>
    </recommendedName>
    <alternativeName>
        <fullName evidence="2">30S ribosomal protein S6</fullName>
    </alternativeName>
</protein>
<accession>Q6MUK4</accession>
<proteinExistence type="inferred from homology"/>
<evidence type="ECO:0000255" key="1">
    <source>
        <dbReference type="HAMAP-Rule" id="MF_00360"/>
    </source>
</evidence>
<evidence type="ECO:0000305" key="2"/>
<name>RS6_MYCMS</name>
<gene>
    <name evidence="1" type="primary">rpsF</name>
    <name type="ordered locus">MSC_0027</name>
</gene>
<organism>
    <name type="scientific">Mycoplasma mycoides subsp. mycoides SC (strain CCUG 32753 / NCTC 10114 / PG1)</name>
    <dbReference type="NCBI Taxonomy" id="272632"/>
    <lineage>
        <taxon>Bacteria</taxon>
        <taxon>Bacillati</taxon>
        <taxon>Mycoplasmatota</taxon>
        <taxon>Mollicutes</taxon>
        <taxon>Mycoplasmataceae</taxon>
        <taxon>Mycoplasma</taxon>
    </lineage>
</organism>
<feature type="chain" id="PRO_0000176797" description="Small ribosomal subunit protein bS6">
    <location>
        <begin position="1"/>
        <end position="137"/>
    </location>
</feature>